<reference key="1">
    <citation type="journal article" date="2009" name="PLoS Genet.">
        <title>Organised genome dynamics in the Escherichia coli species results in highly diverse adaptive paths.</title>
        <authorList>
            <person name="Touchon M."/>
            <person name="Hoede C."/>
            <person name="Tenaillon O."/>
            <person name="Barbe V."/>
            <person name="Baeriswyl S."/>
            <person name="Bidet P."/>
            <person name="Bingen E."/>
            <person name="Bonacorsi S."/>
            <person name="Bouchier C."/>
            <person name="Bouvet O."/>
            <person name="Calteau A."/>
            <person name="Chiapello H."/>
            <person name="Clermont O."/>
            <person name="Cruveiller S."/>
            <person name="Danchin A."/>
            <person name="Diard M."/>
            <person name="Dossat C."/>
            <person name="Karoui M.E."/>
            <person name="Frapy E."/>
            <person name="Garry L."/>
            <person name="Ghigo J.M."/>
            <person name="Gilles A.M."/>
            <person name="Johnson J."/>
            <person name="Le Bouguenec C."/>
            <person name="Lescat M."/>
            <person name="Mangenot S."/>
            <person name="Martinez-Jehanne V."/>
            <person name="Matic I."/>
            <person name="Nassif X."/>
            <person name="Oztas S."/>
            <person name="Petit M.A."/>
            <person name="Pichon C."/>
            <person name="Rouy Z."/>
            <person name="Ruf C.S."/>
            <person name="Schneider D."/>
            <person name="Tourret J."/>
            <person name="Vacherie B."/>
            <person name="Vallenet D."/>
            <person name="Medigue C."/>
            <person name="Rocha E.P.C."/>
            <person name="Denamur E."/>
        </authorList>
    </citation>
    <scope>NUCLEOTIDE SEQUENCE [LARGE SCALE GENOMIC DNA]</scope>
    <source>
        <strain>IAI39 / ExPEC</strain>
    </source>
</reference>
<accession>B7NTQ7</accession>
<protein>
    <recommendedName>
        <fullName evidence="1">Small ribosomal subunit protein bS18</fullName>
    </recommendedName>
    <alternativeName>
        <fullName evidence="2">30S ribosomal protein S18</fullName>
    </alternativeName>
</protein>
<comment type="function">
    <text evidence="1">Binds as a heterodimer with protein bS6 to the central domain of the 16S rRNA, where it helps stabilize the platform of the 30S subunit.</text>
</comment>
<comment type="subunit">
    <text evidence="1">Part of the 30S ribosomal subunit. Forms a tight heterodimer with protein bS6.</text>
</comment>
<comment type="similarity">
    <text evidence="1">Belongs to the bacterial ribosomal protein bS18 family.</text>
</comment>
<dbReference type="EMBL" id="CU928164">
    <property type="protein sequence ID" value="CAR20764.1"/>
    <property type="molecule type" value="Genomic_DNA"/>
</dbReference>
<dbReference type="RefSeq" id="WP_000135199.1">
    <property type="nucleotide sequence ID" value="NC_011750.1"/>
</dbReference>
<dbReference type="RefSeq" id="YP_002410527.1">
    <property type="nucleotide sequence ID" value="NC_011750.1"/>
</dbReference>
<dbReference type="SMR" id="B7NTQ7"/>
<dbReference type="STRING" id="585057.ECIAI39_4666"/>
<dbReference type="GeneID" id="98186237"/>
<dbReference type="KEGG" id="ect:ECIAI39_4666"/>
<dbReference type="PATRIC" id="fig|585057.6.peg.4814"/>
<dbReference type="HOGENOM" id="CLU_148710_2_3_6"/>
<dbReference type="PRO" id="PR:B7NTQ7"/>
<dbReference type="Proteomes" id="UP000000749">
    <property type="component" value="Chromosome"/>
</dbReference>
<dbReference type="GO" id="GO:0022627">
    <property type="term" value="C:cytosolic small ribosomal subunit"/>
    <property type="evidence" value="ECO:0007669"/>
    <property type="project" value="TreeGrafter"/>
</dbReference>
<dbReference type="GO" id="GO:0070181">
    <property type="term" value="F:small ribosomal subunit rRNA binding"/>
    <property type="evidence" value="ECO:0007669"/>
    <property type="project" value="TreeGrafter"/>
</dbReference>
<dbReference type="GO" id="GO:0003735">
    <property type="term" value="F:structural constituent of ribosome"/>
    <property type="evidence" value="ECO:0007669"/>
    <property type="project" value="InterPro"/>
</dbReference>
<dbReference type="GO" id="GO:0006412">
    <property type="term" value="P:translation"/>
    <property type="evidence" value="ECO:0007669"/>
    <property type="project" value="UniProtKB-UniRule"/>
</dbReference>
<dbReference type="FunFam" id="4.10.640.10:FF:000001">
    <property type="entry name" value="30S ribosomal protein S18"/>
    <property type="match status" value="1"/>
</dbReference>
<dbReference type="Gene3D" id="4.10.640.10">
    <property type="entry name" value="Ribosomal protein S18"/>
    <property type="match status" value="1"/>
</dbReference>
<dbReference type="HAMAP" id="MF_00270">
    <property type="entry name" value="Ribosomal_bS18"/>
    <property type="match status" value="1"/>
</dbReference>
<dbReference type="InterPro" id="IPR001648">
    <property type="entry name" value="Ribosomal_bS18"/>
</dbReference>
<dbReference type="InterPro" id="IPR018275">
    <property type="entry name" value="Ribosomal_bS18_CS"/>
</dbReference>
<dbReference type="InterPro" id="IPR036870">
    <property type="entry name" value="Ribosomal_bS18_sf"/>
</dbReference>
<dbReference type="NCBIfam" id="TIGR00165">
    <property type="entry name" value="S18"/>
    <property type="match status" value="1"/>
</dbReference>
<dbReference type="PANTHER" id="PTHR13479">
    <property type="entry name" value="30S RIBOSOMAL PROTEIN S18"/>
    <property type="match status" value="1"/>
</dbReference>
<dbReference type="PANTHER" id="PTHR13479:SF40">
    <property type="entry name" value="SMALL RIBOSOMAL SUBUNIT PROTEIN BS18M"/>
    <property type="match status" value="1"/>
</dbReference>
<dbReference type="Pfam" id="PF01084">
    <property type="entry name" value="Ribosomal_S18"/>
    <property type="match status" value="1"/>
</dbReference>
<dbReference type="PRINTS" id="PR00974">
    <property type="entry name" value="RIBOSOMALS18"/>
</dbReference>
<dbReference type="SUPFAM" id="SSF46911">
    <property type="entry name" value="Ribosomal protein S18"/>
    <property type="match status" value="1"/>
</dbReference>
<dbReference type="PROSITE" id="PS00057">
    <property type="entry name" value="RIBOSOMAL_S18"/>
    <property type="match status" value="1"/>
</dbReference>
<evidence type="ECO:0000255" key="1">
    <source>
        <dbReference type="HAMAP-Rule" id="MF_00270"/>
    </source>
</evidence>
<evidence type="ECO:0000305" key="2"/>
<gene>
    <name evidence="1" type="primary">rpsR</name>
    <name type="ordered locus">ECIAI39_4666</name>
</gene>
<proteinExistence type="inferred from homology"/>
<organism>
    <name type="scientific">Escherichia coli O7:K1 (strain IAI39 / ExPEC)</name>
    <dbReference type="NCBI Taxonomy" id="585057"/>
    <lineage>
        <taxon>Bacteria</taxon>
        <taxon>Pseudomonadati</taxon>
        <taxon>Pseudomonadota</taxon>
        <taxon>Gammaproteobacteria</taxon>
        <taxon>Enterobacterales</taxon>
        <taxon>Enterobacteriaceae</taxon>
        <taxon>Escherichia</taxon>
    </lineage>
</organism>
<name>RS18_ECO7I</name>
<keyword id="KW-0687">Ribonucleoprotein</keyword>
<keyword id="KW-0689">Ribosomal protein</keyword>
<keyword id="KW-0694">RNA-binding</keyword>
<keyword id="KW-0699">rRNA-binding</keyword>
<feature type="chain" id="PRO_1000119277" description="Small ribosomal subunit protein bS18">
    <location>
        <begin position="1"/>
        <end position="75"/>
    </location>
</feature>
<sequence>MARYFRRRKFCRFTAEGVQEIDYKDIATLKNYITESGKIVPSRITGTRAKYQRQLARAIKRARYLSLLPYTDRHQ</sequence>